<accession>O70210</accession>
<keyword id="KW-1015">Disulfide bond</keyword>
<keyword id="KW-0272">Extracellular matrix</keyword>
<keyword id="KW-0325">Glycoprotein</keyword>
<keyword id="KW-0433">Leucine-rich repeat</keyword>
<keyword id="KW-1185">Reference proteome</keyword>
<keyword id="KW-0677">Repeat</keyword>
<keyword id="KW-0964">Secreted</keyword>
<keyword id="KW-0732">Signal</keyword>
<organism>
    <name type="scientific">Rattus norvegicus</name>
    <name type="common">Rat</name>
    <dbReference type="NCBI Taxonomy" id="10116"/>
    <lineage>
        <taxon>Eukaryota</taxon>
        <taxon>Metazoa</taxon>
        <taxon>Chordata</taxon>
        <taxon>Craniata</taxon>
        <taxon>Vertebrata</taxon>
        <taxon>Euteleostomi</taxon>
        <taxon>Mammalia</taxon>
        <taxon>Eutheria</taxon>
        <taxon>Euarchontoglires</taxon>
        <taxon>Glires</taxon>
        <taxon>Rodentia</taxon>
        <taxon>Myomorpha</taxon>
        <taxon>Muroidea</taxon>
        <taxon>Muridae</taxon>
        <taxon>Murinae</taxon>
        <taxon>Rattus</taxon>
    </lineage>
</organism>
<feature type="signal peptide" evidence="2">
    <location>
        <begin position="1"/>
        <end position="20"/>
    </location>
</feature>
<feature type="chain" id="PRO_0000032775" description="Chondroadherin">
    <location>
        <begin position="21"/>
        <end position="358"/>
    </location>
</feature>
<feature type="domain" description="LRRNT">
    <location>
        <begin position="21"/>
        <end position="50"/>
    </location>
</feature>
<feature type="repeat" description="LRR 1">
    <location>
        <begin position="51"/>
        <end position="72"/>
    </location>
</feature>
<feature type="repeat" description="LRR 2">
    <location>
        <begin position="75"/>
        <end position="96"/>
    </location>
</feature>
<feature type="repeat" description="LRR 3">
    <location>
        <begin position="99"/>
        <end position="120"/>
    </location>
</feature>
<feature type="repeat" description="LRR 4">
    <location>
        <begin position="123"/>
        <end position="144"/>
    </location>
</feature>
<feature type="repeat" description="LRR 5">
    <location>
        <begin position="147"/>
        <end position="168"/>
    </location>
</feature>
<feature type="repeat" description="LRR 6">
    <location>
        <begin position="171"/>
        <end position="192"/>
    </location>
</feature>
<feature type="repeat" description="LRR 7">
    <location>
        <begin position="195"/>
        <end position="216"/>
    </location>
</feature>
<feature type="repeat" description="LRR 8">
    <location>
        <begin position="219"/>
        <end position="240"/>
    </location>
</feature>
<feature type="repeat" description="LRR 9">
    <location>
        <begin position="244"/>
        <end position="265"/>
    </location>
</feature>
<feature type="repeat" description="LRR 10">
    <location>
        <begin position="268"/>
        <end position="289"/>
    </location>
</feature>
<feature type="domain" description="LRRCT">
    <location>
        <begin position="299"/>
        <end position="347"/>
    </location>
</feature>
<feature type="region of interest" description="Disordered" evidence="3">
    <location>
        <begin position="321"/>
        <end position="358"/>
    </location>
</feature>
<feature type="compositionally biased region" description="Basic residues" evidence="3">
    <location>
        <begin position="348"/>
        <end position="358"/>
    </location>
</feature>
<feature type="glycosylation site" description="O-linked (GalNAc...) serine" evidence="2">
    <location>
        <position position="143"/>
    </location>
</feature>
<feature type="disulfide bond" evidence="1">
    <location>
        <begin position="22"/>
        <end position="37"/>
    </location>
</feature>
<feature type="disulfide bond" evidence="1">
    <location>
        <begin position="303"/>
        <end position="345"/>
    </location>
</feature>
<feature type="disulfide bond" evidence="1">
    <location>
        <begin position="305"/>
        <end position="325"/>
    </location>
</feature>
<name>CHAD_RAT</name>
<evidence type="ECO:0000250" key="1"/>
<evidence type="ECO:0000255" key="2"/>
<evidence type="ECO:0000256" key="3">
    <source>
        <dbReference type="SAM" id="MobiDB-lite"/>
    </source>
</evidence>
<evidence type="ECO:0000305" key="4"/>
<protein>
    <recommendedName>
        <fullName>Chondroadherin</fullName>
    </recommendedName>
    <alternativeName>
        <fullName>Cartilage leucine-rich protein</fullName>
    </alternativeName>
</protein>
<sequence>MARVLLLSLVFLAILLPALAACPQNCHCHGDLQHVICDKVGLQKIPKVSETTKLLNLQRNNFPVLAANSFRTVPNLVSLHLQHCNIREVAAGAFRGLKQLIYLYLSHNDIRVLRAGAFDDLTELTYLYLDHNKVSELPRGLLSPLVNLFILQLNNNKIRELRAGAFQGAKDLRWLYLSENALTSLHPGSLDDVENLAKFHLDRNQLSSYPSAALSKLRVVEELKLSHNPLKSIPDNAFQSFGRYLETLWLDNTNLEKFSDAAFAGVTTLKHVHLENNRLNQLPSTFPFDNLETLTLTNNPWKCTCQLRGLRRWLEAKTSRPDATCSSPAKFKGQRIRDTDALRSCKSPTKRSKKAGRH</sequence>
<reference key="1">
    <citation type="journal article" date="1998" name="Biochem. J.">
        <title>Chondroadherin expression changes in skeletal development.</title>
        <authorList>
            <person name="Shen Z."/>
            <person name="Gantcheva S."/>
            <person name="Maansson B."/>
            <person name="Heinegaard D."/>
            <person name="Sommarin Y."/>
        </authorList>
    </citation>
    <scope>NUCLEOTIDE SEQUENCE [MRNA]</scope>
    <source>
        <tissue>Chondrosarcoma</tissue>
    </source>
</reference>
<dbReference type="EMBL" id="AF004953">
    <property type="protein sequence ID" value="AAC40060.1"/>
    <property type="molecule type" value="mRNA"/>
</dbReference>
<dbReference type="RefSeq" id="NP_062037.1">
    <property type="nucleotide sequence ID" value="NM_019164.2"/>
</dbReference>
<dbReference type="SMR" id="O70210"/>
<dbReference type="FunCoup" id="O70210">
    <property type="interactions" value="373"/>
</dbReference>
<dbReference type="STRING" id="10116.ENSRNOP00000004435"/>
<dbReference type="GlyCosmos" id="O70210">
    <property type="glycosylation" value="1 site, No reported glycans"/>
</dbReference>
<dbReference type="GlyGen" id="O70210">
    <property type="glycosylation" value="1 site"/>
</dbReference>
<dbReference type="iPTMnet" id="O70210"/>
<dbReference type="PhosphoSitePlus" id="O70210"/>
<dbReference type="PaxDb" id="10116-ENSRNOP00000004435"/>
<dbReference type="GeneID" id="29195"/>
<dbReference type="KEGG" id="rno:29195"/>
<dbReference type="UCSC" id="RGD:2336">
    <property type="organism name" value="rat"/>
</dbReference>
<dbReference type="AGR" id="RGD:2336"/>
<dbReference type="CTD" id="1101"/>
<dbReference type="RGD" id="2336">
    <property type="gene designation" value="Chad"/>
</dbReference>
<dbReference type="eggNOG" id="KOG0619">
    <property type="taxonomic scope" value="Eukaryota"/>
</dbReference>
<dbReference type="HOGENOM" id="CLU_000288_18_6_1"/>
<dbReference type="InParanoid" id="O70210"/>
<dbReference type="OrthoDB" id="34064at9989"/>
<dbReference type="PhylomeDB" id="O70210"/>
<dbReference type="TreeFam" id="TF332659"/>
<dbReference type="PRO" id="PR:O70210"/>
<dbReference type="Proteomes" id="UP000002494">
    <property type="component" value="Unplaced"/>
</dbReference>
<dbReference type="GO" id="GO:0031012">
    <property type="term" value="C:extracellular matrix"/>
    <property type="evidence" value="ECO:0000318"/>
    <property type="project" value="GO_Central"/>
</dbReference>
<dbReference type="GO" id="GO:0005615">
    <property type="term" value="C:extracellular space"/>
    <property type="evidence" value="ECO:0000318"/>
    <property type="project" value="GO_Central"/>
</dbReference>
<dbReference type="GO" id="GO:0060348">
    <property type="term" value="P:bone development"/>
    <property type="evidence" value="ECO:0000266"/>
    <property type="project" value="RGD"/>
</dbReference>
<dbReference type="GO" id="GO:0001502">
    <property type="term" value="P:cartilage condensation"/>
    <property type="evidence" value="ECO:0000270"/>
    <property type="project" value="RGD"/>
</dbReference>
<dbReference type="GO" id="GO:1900155">
    <property type="term" value="P:negative regulation of bone trabecula formation"/>
    <property type="evidence" value="ECO:0000266"/>
    <property type="project" value="RGD"/>
</dbReference>
<dbReference type="FunFam" id="3.80.10.10:FF:000059">
    <property type="entry name" value="Chondroadherin like"/>
    <property type="match status" value="1"/>
</dbReference>
<dbReference type="Gene3D" id="3.80.10.10">
    <property type="entry name" value="Ribonuclease Inhibitor"/>
    <property type="match status" value="1"/>
</dbReference>
<dbReference type="InterPro" id="IPR000483">
    <property type="entry name" value="Cys-rich_flank_reg_C"/>
</dbReference>
<dbReference type="InterPro" id="IPR001611">
    <property type="entry name" value="Leu-rich_rpt"/>
</dbReference>
<dbReference type="InterPro" id="IPR003591">
    <property type="entry name" value="Leu-rich_rpt_typical-subtyp"/>
</dbReference>
<dbReference type="InterPro" id="IPR032675">
    <property type="entry name" value="LRR_dom_sf"/>
</dbReference>
<dbReference type="InterPro" id="IPR000372">
    <property type="entry name" value="LRRNT"/>
</dbReference>
<dbReference type="PANTHER" id="PTHR24366">
    <property type="entry name" value="IG(IMMUNOGLOBULIN) AND LRR(LEUCINE RICH REPEAT) DOMAINS"/>
    <property type="match status" value="1"/>
</dbReference>
<dbReference type="PANTHER" id="PTHR24366:SF161">
    <property type="entry name" value="TIR DOMAIN-CONTAINING PROTEIN"/>
    <property type="match status" value="1"/>
</dbReference>
<dbReference type="Pfam" id="PF13855">
    <property type="entry name" value="LRR_8"/>
    <property type="match status" value="3"/>
</dbReference>
<dbReference type="Pfam" id="PF01462">
    <property type="entry name" value="LRRNT"/>
    <property type="match status" value="1"/>
</dbReference>
<dbReference type="SMART" id="SM00369">
    <property type="entry name" value="LRR_TYP"/>
    <property type="match status" value="9"/>
</dbReference>
<dbReference type="SMART" id="SM00082">
    <property type="entry name" value="LRRCT"/>
    <property type="match status" value="1"/>
</dbReference>
<dbReference type="SMART" id="SM00013">
    <property type="entry name" value="LRRNT"/>
    <property type="match status" value="1"/>
</dbReference>
<dbReference type="SUPFAM" id="SSF52058">
    <property type="entry name" value="L domain-like"/>
    <property type="match status" value="1"/>
</dbReference>
<dbReference type="PROSITE" id="PS51450">
    <property type="entry name" value="LRR"/>
    <property type="match status" value="10"/>
</dbReference>
<proteinExistence type="evidence at transcript level"/>
<gene>
    <name type="primary">Chad</name>
</gene>
<comment type="function">
    <text evidence="1">Promotes attachment of chondrocytes, fibroblasts, and osteoblasts. This binding is mediated (at least for chondrocytes and fibroblasts) by the integrin alpha(2)beta(1). May play an important role in the regulation of chondrocyte growth and proliferation (By similarity).</text>
</comment>
<comment type="subunit">
    <text evidence="1">Mostly monomeric.</text>
</comment>
<comment type="subcellular location">
    <subcellularLocation>
        <location evidence="1">Secreted</location>
        <location evidence="1">Extracellular space</location>
        <location evidence="1">Extracellular matrix</location>
    </subcellularLocation>
</comment>
<comment type="tissue specificity">
    <text>Present in femoral head and rib cartilage, as well as in tendon. Detected in bone marrow.</text>
</comment>
<comment type="similarity">
    <text evidence="4">Belongs to the small leucine-rich proteoglycan (SLRP) family. SLRP class IV subfamily.</text>
</comment>